<accession>A9L5D5</accession>
<gene>
    <name evidence="1" type="primary">rhlB</name>
    <name type="ordered locus">Sbal195_4069</name>
</gene>
<feature type="chain" id="PRO_1000082859" description="ATP-dependent RNA helicase RhlB">
    <location>
        <begin position="1"/>
        <end position="438"/>
    </location>
</feature>
<feature type="domain" description="Helicase ATP-binding" evidence="1">
    <location>
        <begin position="40"/>
        <end position="219"/>
    </location>
</feature>
<feature type="domain" description="Helicase C-terminal" evidence="1">
    <location>
        <begin position="243"/>
        <end position="390"/>
    </location>
</feature>
<feature type="region of interest" description="Disordered" evidence="2">
    <location>
        <begin position="395"/>
        <end position="438"/>
    </location>
</feature>
<feature type="short sequence motif" description="Q motif">
    <location>
        <begin position="9"/>
        <end position="37"/>
    </location>
</feature>
<feature type="short sequence motif" description="DEAD box">
    <location>
        <begin position="165"/>
        <end position="168"/>
    </location>
</feature>
<feature type="compositionally biased region" description="Basic residues" evidence="2">
    <location>
        <begin position="428"/>
        <end position="438"/>
    </location>
</feature>
<feature type="binding site" evidence="1">
    <location>
        <begin position="53"/>
        <end position="60"/>
    </location>
    <ligand>
        <name>ATP</name>
        <dbReference type="ChEBI" id="CHEBI:30616"/>
    </ligand>
</feature>
<dbReference type="EC" id="3.6.4.13" evidence="1"/>
<dbReference type="EMBL" id="CP000891">
    <property type="protein sequence ID" value="ABX51229.1"/>
    <property type="molecule type" value="Genomic_DNA"/>
</dbReference>
<dbReference type="RefSeq" id="WP_006084377.1">
    <property type="nucleotide sequence ID" value="NC_009997.1"/>
</dbReference>
<dbReference type="SMR" id="A9L5D5"/>
<dbReference type="GeneID" id="11774065"/>
<dbReference type="KEGG" id="sbn:Sbal195_4069"/>
<dbReference type="HOGENOM" id="CLU_003041_28_3_6"/>
<dbReference type="Proteomes" id="UP000000770">
    <property type="component" value="Chromosome"/>
</dbReference>
<dbReference type="GO" id="GO:0005829">
    <property type="term" value="C:cytosol"/>
    <property type="evidence" value="ECO:0007669"/>
    <property type="project" value="TreeGrafter"/>
</dbReference>
<dbReference type="GO" id="GO:0005524">
    <property type="term" value="F:ATP binding"/>
    <property type="evidence" value="ECO:0007669"/>
    <property type="project" value="UniProtKB-UniRule"/>
</dbReference>
<dbReference type="GO" id="GO:0016887">
    <property type="term" value="F:ATP hydrolysis activity"/>
    <property type="evidence" value="ECO:0007669"/>
    <property type="project" value="RHEA"/>
</dbReference>
<dbReference type="GO" id="GO:0003723">
    <property type="term" value="F:RNA binding"/>
    <property type="evidence" value="ECO:0007669"/>
    <property type="project" value="UniProtKB-UniRule"/>
</dbReference>
<dbReference type="GO" id="GO:0003724">
    <property type="term" value="F:RNA helicase activity"/>
    <property type="evidence" value="ECO:0007669"/>
    <property type="project" value="UniProtKB-UniRule"/>
</dbReference>
<dbReference type="GO" id="GO:0006401">
    <property type="term" value="P:RNA catabolic process"/>
    <property type="evidence" value="ECO:0007669"/>
    <property type="project" value="UniProtKB-UniRule"/>
</dbReference>
<dbReference type="CDD" id="cd00268">
    <property type="entry name" value="DEADc"/>
    <property type="match status" value="1"/>
</dbReference>
<dbReference type="CDD" id="cd18787">
    <property type="entry name" value="SF2_C_DEAD"/>
    <property type="match status" value="1"/>
</dbReference>
<dbReference type="FunFam" id="3.40.50.300:FF:000008">
    <property type="entry name" value="ATP-dependent RNA helicase RhlB"/>
    <property type="match status" value="1"/>
</dbReference>
<dbReference type="FunFam" id="3.40.50.300:FF:000312">
    <property type="entry name" value="ATP-dependent RNA helicase RhlB"/>
    <property type="match status" value="1"/>
</dbReference>
<dbReference type="Gene3D" id="3.40.50.300">
    <property type="entry name" value="P-loop containing nucleotide triphosphate hydrolases"/>
    <property type="match status" value="2"/>
</dbReference>
<dbReference type="HAMAP" id="MF_00661">
    <property type="entry name" value="DEAD_helicase_RhlB"/>
    <property type="match status" value="1"/>
</dbReference>
<dbReference type="InterPro" id="IPR011545">
    <property type="entry name" value="DEAD/DEAH_box_helicase_dom"/>
</dbReference>
<dbReference type="InterPro" id="IPR050079">
    <property type="entry name" value="DEAD_box_RNA_helicase"/>
</dbReference>
<dbReference type="InterPro" id="IPR014001">
    <property type="entry name" value="Helicase_ATP-bd"/>
</dbReference>
<dbReference type="InterPro" id="IPR001650">
    <property type="entry name" value="Helicase_C-like"/>
</dbReference>
<dbReference type="InterPro" id="IPR027417">
    <property type="entry name" value="P-loop_NTPase"/>
</dbReference>
<dbReference type="InterPro" id="IPR000629">
    <property type="entry name" value="RNA-helicase_DEAD-box_CS"/>
</dbReference>
<dbReference type="InterPro" id="IPR023554">
    <property type="entry name" value="RNA_helicase_ATP-dep_RhlB"/>
</dbReference>
<dbReference type="InterPro" id="IPR014014">
    <property type="entry name" value="RNA_helicase_DEAD_Q_motif"/>
</dbReference>
<dbReference type="NCBIfam" id="NF003419">
    <property type="entry name" value="PRK04837.1"/>
    <property type="match status" value="1"/>
</dbReference>
<dbReference type="PANTHER" id="PTHR47959:SF10">
    <property type="entry name" value="ATP-DEPENDENT RNA HELICASE RHLB"/>
    <property type="match status" value="1"/>
</dbReference>
<dbReference type="PANTHER" id="PTHR47959">
    <property type="entry name" value="ATP-DEPENDENT RNA HELICASE RHLE-RELATED"/>
    <property type="match status" value="1"/>
</dbReference>
<dbReference type="Pfam" id="PF00270">
    <property type="entry name" value="DEAD"/>
    <property type="match status" value="1"/>
</dbReference>
<dbReference type="Pfam" id="PF00271">
    <property type="entry name" value="Helicase_C"/>
    <property type="match status" value="1"/>
</dbReference>
<dbReference type="SMART" id="SM00487">
    <property type="entry name" value="DEXDc"/>
    <property type="match status" value="1"/>
</dbReference>
<dbReference type="SMART" id="SM00490">
    <property type="entry name" value="HELICc"/>
    <property type="match status" value="1"/>
</dbReference>
<dbReference type="SUPFAM" id="SSF52540">
    <property type="entry name" value="P-loop containing nucleoside triphosphate hydrolases"/>
    <property type="match status" value="1"/>
</dbReference>
<dbReference type="PROSITE" id="PS00039">
    <property type="entry name" value="DEAD_ATP_HELICASE"/>
    <property type="match status" value="1"/>
</dbReference>
<dbReference type="PROSITE" id="PS51192">
    <property type="entry name" value="HELICASE_ATP_BIND_1"/>
    <property type="match status" value="1"/>
</dbReference>
<dbReference type="PROSITE" id="PS51194">
    <property type="entry name" value="HELICASE_CTER"/>
    <property type="match status" value="1"/>
</dbReference>
<dbReference type="PROSITE" id="PS51195">
    <property type="entry name" value="Q_MOTIF"/>
    <property type="match status" value="1"/>
</dbReference>
<organism>
    <name type="scientific">Shewanella baltica (strain OS195)</name>
    <dbReference type="NCBI Taxonomy" id="399599"/>
    <lineage>
        <taxon>Bacteria</taxon>
        <taxon>Pseudomonadati</taxon>
        <taxon>Pseudomonadota</taxon>
        <taxon>Gammaproteobacteria</taxon>
        <taxon>Alteromonadales</taxon>
        <taxon>Shewanellaceae</taxon>
        <taxon>Shewanella</taxon>
    </lineage>
</organism>
<proteinExistence type="inferred from homology"/>
<name>RHLB_SHEB9</name>
<sequence>MSETHLSTQRFADLPLHPEVKQALAENGFEFCTPIQALSLPVLLQSKDIAGQAQTGTGKTMAFLVATFNHLLSTPVPEGRLINQPRAIIMAPTRELAIQIAKDAILLAKHTHLKVGIVYGGESYDVQRKVLDQGVDILIGTTGRIIDYVRQGIIGLNSIQAVVLDEADRMFDLGFIKDIRFLFRRMPEANQRLNMLFSATLSMKVQELAYDHMNEPVKVEIAPEEKTSKNIKEEIFYPSQEEKMRLLLTLIEEDWPEKAIVFSNTKHSCETLWSWLEGDGHRVGLLTGDVPQKKRIRILEQFTSGQLDILVATDVAARGLHISDVSHVYNYDLPDDCEDYVHRIGRTGRAGNKGMSISFACEEYALNLPAIESYINHSIPVSNYDSEALLADIPTPAKIHRKHPSGTRNLRDRSGASRPGAQRSGARPPRHDRTRRHS</sequence>
<comment type="function">
    <text evidence="1">DEAD-box RNA helicase involved in RNA degradation. Has RNA-dependent ATPase activity and unwinds double-stranded RNA.</text>
</comment>
<comment type="catalytic activity">
    <reaction evidence="1">
        <text>ATP + H2O = ADP + phosphate + H(+)</text>
        <dbReference type="Rhea" id="RHEA:13065"/>
        <dbReference type="ChEBI" id="CHEBI:15377"/>
        <dbReference type="ChEBI" id="CHEBI:15378"/>
        <dbReference type="ChEBI" id="CHEBI:30616"/>
        <dbReference type="ChEBI" id="CHEBI:43474"/>
        <dbReference type="ChEBI" id="CHEBI:456216"/>
        <dbReference type="EC" id="3.6.4.13"/>
    </reaction>
</comment>
<comment type="subunit">
    <text evidence="1">Component of the RNA degradosome, which is a multiprotein complex involved in RNA processing and mRNA degradation.</text>
</comment>
<comment type="subcellular location">
    <subcellularLocation>
        <location evidence="1">Cytoplasm</location>
    </subcellularLocation>
</comment>
<comment type="similarity">
    <text evidence="1">Belongs to the DEAD box helicase family. RhlB subfamily.</text>
</comment>
<reference key="1">
    <citation type="submission" date="2007-11" db="EMBL/GenBank/DDBJ databases">
        <title>Complete sequence of chromosome of Shewanella baltica OS195.</title>
        <authorList>
            <consortium name="US DOE Joint Genome Institute"/>
            <person name="Copeland A."/>
            <person name="Lucas S."/>
            <person name="Lapidus A."/>
            <person name="Barry K."/>
            <person name="Glavina del Rio T."/>
            <person name="Dalin E."/>
            <person name="Tice H."/>
            <person name="Pitluck S."/>
            <person name="Chain P."/>
            <person name="Malfatti S."/>
            <person name="Shin M."/>
            <person name="Vergez L."/>
            <person name="Schmutz J."/>
            <person name="Larimer F."/>
            <person name="Land M."/>
            <person name="Hauser L."/>
            <person name="Kyrpides N."/>
            <person name="Kim E."/>
            <person name="Brettar I."/>
            <person name="Rodrigues J."/>
            <person name="Konstantinidis K."/>
            <person name="Klappenbach J."/>
            <person name="Hofle M."/>
            <person name="Tiedje J."/>
            <person name="Richardson P."/>
        </authorList>
    </citation>
    <scope>NUCLEOTIDE SEQUENCE [LARGE SCALE GENOMIC DNA]</scope>
    <source>
        <strain>OS195</strain>
    </source>
</reference>
<evidence type="ECO:0000255" key="1">
    <source>
        <dbReference type="HAMAP-Rule" id="MF_00661"/>
    </source>
</evidence>
<evidence type="ECO:0000256" key="2">
    <source>
        <dbReference type="SAM" id="MobiDB-lite"/>
    </source>
</evidence>
<protein>
    <recommendedName>
        <fullName evidence="1">ATP-dependent RNA helicase RhlB</fullName>
        <ecNumber evidence="1">3.6.4.13</ecNumber>
    </recommendedName>
</protein>
<keyword id="KW-0067">ATP-binding</keyword>
<keyword id="KW-0963">Cytoplasm</keyword>
<keyword id="KW-0347">Helicase</keyword>
<keyword id="KW-0378">Hydrolase</keyword>
<keyword id="KW-0547">Nucleotide-binding</keyword>
<keyword id="KW-0694">RNA-binding</keyword>